<gene>
    <name evidence="1" type="primary">engB</name>
    <name type="ordered locus">USA300HOU_1665</name>
</gene>
<sequence length="196" mass="22685">MKVNPNNIELIISAVKEEQYPETELSEVALSGRSNVGKSTFINSMIGRKNMARTSQQPGKTQTLNFYNIDEQLIFVDVPGYGYAKVSKTQREKFGKMIEEYITKRENLQLVIQLVDLRHDPTQDDILMYNYLKHFDIPTLVICTKEDKIPKGKVQKHIKNIKTQLDMDPDDTIVSYSSIQNNKQQQIWNLIEPYIS</sequence>
<evidence type="ECO:0000255" key="1">
    <source>
        <dbReference type="HAMAP-Rule" id="MF_00321"/>
    </source>
</evidence>
<accession>A8Z2J4</accession>
<dbReference type="EMBL" id="CP000730">
    <property type="protein sequence ID" value="ABX29672.1"/>
    <property type="molecule type" value="Genomic_DNA"/>
</dbReference>
<dbReference type="SMR" id="A8Z2J4"/>
<dbReference type="KEGG" id="sax:USA300HOU_1665"/>
<dbReference type="HOGENOM" id="CLU_033732_3_0_9"/>
<dbReference type="GO" id="GO:0005829">
    <property type="term" value="C:cytosol"/>
    <property type="evidence" value="ECO:0007669"/>
    <property type="project" value="TreeGrafter"/>
</dbReference>
<dbReference type="GO" id="GO:0005525">
    <property type="term" value="F:GTP binding"/>
    <property type="evidence" value="ECO:0007669"/>
    <property type="project" value="UniProtKB-UniRule"/>
</dbReference>
<dbReference type="GO" id="GO:0046872">
    <property type="term" value="F:metal ion binding"/>
    <property type="evidence" value="ECO:0007669"/>
    <property type="project" value="UniProtKB-KW"/>
</dbReference>
<dbReference type="GO" id="GO:0000917">
    <property type="term" value="P:division septum assembly"/>
    <property type="evidence" value="ECO:0007669"/>
    <property type="project" value="UniProtKB-KW"/>
</dbReference>
<dbReference type="CDD" id="cd01876">
    <property type="entry name" value="YihA_EngB"/>
    <property type="match status" value="1"/>
</dbReference>
<dbReference type="FunFam" id="3.40.50.300:FF:000098">
    <property type="entry name" value="Probable GTP-binding protein EngB"/>
    <property type="match status" value="1"/>
</dbReference>
<dbReference type="Gene3D" id="3.40.50.300">
    <property type="entry name" value="P-loop containing nucleotide triphosphate hydrolases"/>
    <property type="match status" value="1"/>
</dbReference>
<dbReference type="HAMAP" id="MF_00321">
    <property type="entry name" value="GTPase_EngB"/>
    <property type="match status" value="1"/>
</dbReference>
<dbReference type="InterPro" id="IPR030393">
    <property type="entry name" value="G_ENGB_dom"/>
</dbReference>
<dbReference type="InterPro" id="IPR006073">
    <property type="entry name" value="GTP-bd"/>
</dbReference>
<dbReference type="InterPro" id="IPR019987">
    <property type="entry name" value="GTP-bd_ribosome_bio_YsxC"/>
</dbReference>
<dbReference type="InterPro" id="IPR027417">
    <property type="entry name" value="P-loop_NTPase"/>
</dbReference>
<dbReference type="NCBIfam" id="TIGR03598">
    <property type="entry name" value="GTPase_YsxC"/>
    <property type="match status" value="1"/>
</dbReference>
<dbReference type="PANTHER" id="PTHR11649:SF13">
    <property type="entry name" value="ENGB-TYPE G DOMAIN-CONTAINING PROTEIN"/>
    <property type="match status" value="1"/>
</dbReference>
<dbReference type="PANTHER" id="PTHR11649">
    <property type="entry name" value="MSS1/TRME-RELATED GTP-BINDING PROTEIN"/>
    <property type="match status" value="1"/>
</dbReference>
<dbReference type="Pfam" id="PF01926">
    <property type="entry name" value="MMR_HSR1"/>
    <property type="match status" value="1"/>
</dbReference>
<dbReference type="SUPFAM" id="SSF52540">
    <property type="entry name" value="P-loop containing nucleoside triphosphate hydrolases"/>
    <property type="match status" value="1"/>
</dbReference>
<dbReference type="PROSITE" id="PS51706">
    <property type="entry name" value="G_ENGB"/>
    <property type="match status" value="1"/>
</dbReference>
<name>ENGB_STAAT</name>
<protein>
    <recommendedName>
        <fullName evidence="1">Probable GTP-binding protein EngB</fullName>
    </recommendedName>
</protein>
<organism>
    <name type="scientific">Staphylococcus aureus (strain USA300 / TCH1516)</name>
    <dbReference type="NCBI Taxonomy" id="451516"/>
    <lineage>
        <taxon>Bacteria</taxon>
        <taxon>Bacillati</taxon>
        <taxon>Bacillota</taxon>
        <taxon>Bacilli</taxon>
        <taxon>Bacillales</taxon>
        <taxon>Staphylococcaceae</taxon>
        <taxon>Staphylococcus</taxon>
    </lineage>
</organism>
<feature type="chain" id="PRO_1000079187" description="Probable GTP-binding protein EngB">
    <location>
        <begin position="1"/>
        <end position="196"/>
    </location>
</feature>
<feature type="domain" description="EngB-type G" evidence="1">
    <location>
        <begin position="24"/>
        <end position="196"/>
    </location>
</feature>
<feature type="binding site" evidence="1">
    <location>
        <begin position="32"/>
        <end position="39"/>
    </location>
    <ligand>
        <name>GTP</name>
        <dbReference type="ChEBI" id="CHEBI:37565"/>
    </ligand>
</feature>
<feature type="binding site" evidence="1">
    <location>
        <position position="39"/>
    </location>
    <ligand>
        <name>Mg(2+)</name>
        <dbReference type="ChEBI" id="CHEBI:18420"/>
    </ligand>
</feature>
<feature type="binding site" evidence="1">
    <location>
        <begin position="59"/>
        <end position="63"/>
    </location>
    <ligand>
        <name>GTP</name>
        <dbReference type="ChEBI" id="CHEBI:37565"/>
    </ligand>
</feature>
<feature type="binding site" evidence="1">
    <location>
        <position position="61"/>
    </location>
    <ligand>
        <name>Mg(2+)</name>
        <dbReference type="ChEBI" id="CHEBI:18420"/>
    </ligand>
</feature>
<feature type="binding site" evidence="1">
    <location>
        <begin position="77"/>
        <end position="80"/>
    </location>
    <ligand>
        <name>GTP</name>
        <dbReference type="ChEBI" id="CHEBI:37565"/>
    </ligand>
</feature>
<feature type="binding site" evidence="1">
    <location>
        <begin position="144"/>
        <end position="147"/>
    </location>
    <ligand>
        <name>GTP</name>
        <dbReference type="ChEBI" id="CHEBI:37565"/>
    </ligand>
</feature>
<feature type="binding site" evidence="1">
    <location>
        <begin position="176"/>
        <end position="178"/>
    </location>
    <ligand>
        <name>GTP</name>
        <dbReference type="ChEBI" id="CHEBI:37565"/>
    </ligand>
</feature>
<proteinExistence type="inferred from homology"/>
<keyword id="KW-0131">Cell cycle</keyword>
<keyword id="KW-0132">Cell division</keyword>
<keyword id="KW-0342">GTP-binding</keyword>
<keyword id="KW-0460">Magnesium</keyword>
<keyword id="KW-0479">Metal-binding</keyword>
<keyword id="KW-0547">Nucleotide-binding</keyword>
<keyword id="KW-0717">Septation</keyword>
<reference key="1">
    <citation type="journal article" date="2007" name="BMC Microbiol.">
        <title>Subtle genetic changes enhance virulence of methicillin resistant and sensitive Staphylococcus aureus.</title>
        <authorList>
            <person name="Highlander S.K."/>
            <person name="Hulten K.G."/>
            <person name="Qin X."/>
            <person name="Jiang H."/>
            <person name="Yerrapragada S."/>
            <person name="Mason E.O. Jr."/>
            <person name="Shang Y."/>
            <person name="Williams T.M."/>
            <person name="Fortunov R.M."/>
            <person name="Liu Y."/>
            <person name="Igboeli O."/>
            <person name="Petrosino J."/>
            <person name="Tirumalai M."/>
            <person name="Uzman A."/>
            <person name="Fox G.E."/>
            <person name="Cardenas A.M."/>
            <person name="Muzny D.M."/>
            <person name="Hemphill L."/>
            <person name="Ding Y."/>
            <person name="Dugan S."/>
            <person name="Blyth P.R."/>
            <person name="Buhay C.J."/>
            <person name="Dinh H.H."/>
            <person name="Hawes A.C."/>
            <person name="Holder M."/>
            <person name="Kovar C.L."/>
            <person name="Lee S.L."/>
            <person name="Liu W."/>
            <person name="Nazareth L.V."/>
            <person name="Wang Q."/>
            <person name="Zhou J."/>
            <person name="Kaplan S.L."/>
            <person name="Weinstock G.M."/>
        </authorList>
    </citation>
    <scope>NUCLEOTIDE SEQUENCE [LARGE SCALE GENOMIC DNA]</scope>
    <source>
        <strain>USA300 / TCH1516</strain>
    </source>
</reference>
<comment type="function">
    <text evidence="1">Necessary for normal cell division and for the maintenance of normal septation.</text>
</comment>
<comment type="cofactor">
    <cofactor evidence="1">
        <name>Mg(2+)</name>
        <dbReference type="ChEBI" id="CHEBI:18420"/>
    </cofactor>
</comment>
<comment type="similarity">
    <text evidence="1">Belongs to the TRAFAC class TrmE-Era-EngA-EngB-Septin-like GTPase superfamily. EngB GTPase family.</text>
</comment>